<proteinExistence type="evidence at protein level"/>
<accession>P13376</accession>
<reference key="1">
    <citation type="journal article" date="1989" name="Nucleic Acids Res.">
        <title>Complete nucleotide sequences of two phosphoglucoisomerase isozymes from Bacillus stearothermophilus.</title>
        <authorList>
            <person name="Tao W."/>
            <person name="Wang L."/>
            <person name="Shen R."/>
            <person name="Sheng Z."/>
        </authorList>
    </citation>
    <scope>NUCLEOTIDE SEQUENCE [GENOMIC DNA]</scope>
    <source>
        <strain>T521</strain>
    </source>
</reference>
<reference key="2">
    <citation type="journal article" date="1999" name="Proc. Natl. Acad. Sci. U.S.A.">
        <title>The crystal structure of a multifunctional protein: phosphoglucose isomerase/autocrine motility factor/neuroleukin.</title>
        <authorList>
            <person name="Sun Y.-J."/>
            <person name="Chou C.-C."/>
            <person name="Chen W.-S."/>
            <person name="Wu R.-T."/>
            <person name="Meng M."/>
            <person name="Hsiao C.-D."/>
        </authorList>
    </citation>
    <scope>X-RAY CRYSTALLOGRAPHY (2.3 ANGSTROMS)</scope>
</reference>
<organism>
    <name type="scientific">Geobacillus stearothermophilus</name>
    <name type="common">Bacillus stearothermophilus</name>
    <dbReference type="NCBI Taxonomy" id="1422"/>
    <lineage>
        <taxon>Bacteria</taxon>
        <taxon>Bacillati</taxon>
        <taxon>Bacillota</taxon>
        <taxon>Bacilli</taxon>
        <taxon>Bacillales</taxon>
        <taxon>Anoxybacillaceae</taxon>
        <taxon>Geobacillus</taxon>
    </lineage>
</organism>
<comment type="function">
    <text evidence="1">Catalyzes the reversible isomerization of glucose-6-phosphate to fructose-6-phosphate.</text>
</comment>
<comment type="catalytic activity">
    <reaction evidence="1">
        <text>alpha-D-glucose 6-phosphate = beta-D-fructose 6-phosphate</text>
        <dbReference type="Rhea" id="RHEA:11816"/>
        <dbReference type="ChEBI" id="CHEBI:57634"/>
        <dbReference type="ChEBI" id="CHEBI:58225"/>
        <dbReference type="EC" id="5.3.1.9"/>
    </reaction>
</comment>
<comment type="pathway">
    <text evidence="1">Carbohydrate biosynthesis; gluconeogenesis.</text>
</comment>
<comment type="pathway">
    <text evidence="1">Carbohydrate degradation; glycolysis; D-glyceraldehyde 3-phosphate and glycerone phosphate from D-glucose: step 2/4.</text>
</comment>
<comment type="subunit">
    <text>Homodimer.</text>
</comment>
<comment type="subcellular location">
    <subcellularLocation>
        <location evidence="1">Cytoplasm</location>
    </subcellularLocation>
</comment>
<comment type="similarity">
    <text evidence="1 2">Belongs to the GPI family.</text>
</comment>
<name>G6PI2_GEOSE</name>
<protein>
    <recommendedName>
        <fullName evidence="1">Glucose-6-phosphate isomerase 2</fullName>
        <shortName evidence="1">GPI 2</shortName>
        <ecNumber evidence="1">5.3.1.9</ecNumber>
    </recommendedName>
    <alternativeName>
        <fullName evidence="1">Phosphoglucose isomerase 2</fullName>
        <shortName evidence="1">PGI 2</shortName>
    </alternativeName>
    <alternativeName>
        <fullName evidence="1">Phosphohexose isomerase 2</fullName>
        <shortName evidence="1">PHI 2</shortName>
    </alternativeName>
</protein>
<keyword id="KW-0002">3D-structure</keyword>
<keyword id="KW-0963">Cytoplasm</keyword>
<keyword id="KW-0312">Gluconeogenesis</keyword>
<keyword id="KW-0324">Glycolysis</keyword>
<keyword id="KW-0413">Isomerase</keyword>
<gene>
    <name evidence="1" type="primary">pgi2</name>
    <name type="synonym">pgiB</name>
</gene>
<feature type="chain" id="PRO_0000180592" description="Glucose-6-phosphate isomerase 2">
    <location>
        <begin position="1"/>
        <end position="445"/>
    </location>
</feature>
<feature type="active site" description="Proton donor" evidence="1">
    <location>
        <position position="285"/>
    </location>
</feature>
<feature type="active site" evidence="1">
    <location>
        <position position="306"/>
    </location>
</feature>
<feature type="active site" evidence="1">
    <location>
        <position position="420"/>
    </location>
</feature>
<feature type="strand" evidence="3">
    <location>
        <begin position="3"/>
        <end position="6"/>
    </location>
</feature>
<feature type="helix" evidence="3">
    <location>
        <begin position="8"/>
        <end position="10"/>
    </location>
</feature>
<feature type="turn" evidence="4">
    <location>
        <begin position="11"/>
        <end position="13"/>
    </location>
</feature>
<feature type="helix" evidence="3">
    <location>
        <begin position="16"/>
        <end position="21"/>
    </location>
</feature>
<feature type="helix" evidence="3">
    <location>
        <begin position="23"/>
        <end position="34"/>
    </location>
</feature>
<feature type="helix" evidence="3">
    <location>
        <begin position="41"/>
        <end position="43"/>
    </location>
</feature>
<feature type="turn" evidence="3">
    <location>
        <begin position="45"/>
        <end position="48"/>
    </location>
</feature>
<feature type="helix" evidence="3">
    <location>
        <begin position="49"/>
        <end position="52"/>
    </location>
</feature>
<feature type="helix" evidence="3">
    <location>
        <begin position="55"/>
        <end position="71"/>
    </location>
</feature>
<feature type="strand" evidence="3">
    <location>
        <begin position="73"/>
        <end position="78"/>
    </location>
</feature>
<feature type="helix" evidence="3">
    <location>
        <begin position="81"/>
        <end position="83"/>
    </location>
</feature>
<feature type="helix" evidence="3">
    <location>
        <begin position="85"/>
        <end position="94"/>
    </location>
</feature>
<feature type="helix" evidence="3">
    <location>
        <begin position="99"/>
        <end position="101"/>
    </location>
</feature>
<feature type="strand" evidence="4">
    <location>
        <begin position="102"/>
        <end position="105"/>
    </location>
</feature>
<feature type="strand" evidence="3">
    <location>
        <begin position="107"/>
        <end position="114"/>
    </location>
</feature>
<feature type="helix" evidence="3">
    <location>
        <begin position="117"/>
        <end position="127"/>
    </location>
</feature>
<feature type="strand" evidence="3">
    <location>
        <begin position="132"/>
        <end position="137"/>
    </location>
</feature>
<feature type="strand" evidence="3">
    <location>
        <begin position="139"/>
        <end position="141"/>
    </location>
</feature>
<feature type="helix" evidence="3">
    <location>
        <begin position="144"/>
        <end position="161"/>
    </location>
</feature>
<feature type="helix" evidence="3">
    <location>
        <begin position="163"/>
        <end position="166"/>
    </location>
</feature>
<feature type="helix" evidence="3">
    <location>
        <begin position="167"/>
        <end position="169"/>
    </location>
</feature>
<feature type="strand" evidence="3">
    <location>
        <begin position="170"/>
        <end position="174"/>
    </location>
</feature>
<feature type="helix" evidence="3">
    <location>
        <begin position="180"/>
        <end position="188"/>
    </location>
</feature>
<feature type="strand" evidence="3">
    <location>
        <begin position="191"/>
        <end position="194"/>
    </location>
</feature>
<feature type="turn" evidence="3">
    <location>
        <begin position="207"/>
        <end position="210"/>
    </location>
</feature>
<feature type="helix" evidence="3">
    <location>
        <begin position="211"/>
        <end position="217"/>
    </location>
</feature>
<feature type="helix" evidence="3">
    <location>
        <begin position="221"/>
        <end position="235"/>
    </location>
</feature>
<feature type="helix" evidence="3">
    <location>
        <begin position="240"/>
        <end position="242"/>
    </location>
</feature>
<feature type="helix" evidence="3">
    <location>
        <begin position="244"/>
        <end position="257"/>
    </location>
</feature>
<feature type="strand" evidence="3">
    <location>
        <begin position="262"/>
        <end position="269"/>
    </location>
</feature>
<feature type="helix" evidence="3">
    <location>
        <begin position="270"/>
        <end position="272"/>
    </location>
</feature>
<feature type="helix" evidence="3">
    <location>
        <begin position="273"/>
        <end position="287"/>
    </location>
</feature>
<feature type="strand" evidence="3">
    <location>
        <begin position="295"/>
        <end position="300"/>
    </location>
</feature>
<feature type="helix" evidence="3">
    <location>
        <begin position="303"/>
        <end position="306"/>
    </location>
</feature>
<feature type="helix" evidence="3">
    <location>
        <begin position="309"/>
        <end position="314"/>
    </location>
</feature>
<feature type="strand" evidence="3">
    <location>
        <begin position="319"/>
        <end position="328"/>
    </location>
</feature>
<feature type="turn" evidence="3">
    <location>
        <begin position="346"/>
        <end position="350"/>
    </location>
</feature>
<feature type="helix" evidence="3">
    <location>
        <begin position="353"/>
        <end position="370"/>
    </location>
</feature>
<feature type="strand" evidence="3">
    <location>
        <begin position="375"/>
        <end position="382"/>
    </location>
</feature>
<feature type="helix" evidence="3">
    <location>
        <begin position="385"/>
        <end position="406"/>
    </location>
</feature>
<feature type="helix" evidence="3">
    <location>
        <begin position="416"/>
        <end position="426"/>
    </location>
</feature>
<feature type="turn" evidence="4">
    <location>
        <begin position="430"/>
        <end position="432"/>
    </location>
</feature>
<feature type="helix" evidence="3">
    <location>
        <begin position="433"/>
        <end position="441"/>
    </location>
</feature>
<sequence>MAISFDYSNALPFMQENELDYLSEFVKAAHHMLHERKGPGSDFLGWVDWPIRYDKNEFSRIKQAAERIRNHSDALVVIGIGGSYLGARAAIEALSHTFHNQMNDTTQIYFAGQNISSTYISHLLDVLEGKDLSINVISKSGTTTEPAIAFRIFRDYMEKKYGKEEARKRIYVTTDRTKGALKKLADQEGYETFVIPDNIGGRYSVLTAVGLLPIAVAGLNIDRMMEGAASAYHKYNNPDLLTNESYQYAAVRNILYRKGKAIELLVNYEPSLHYVSEWWKQLFGESEGKDQKGLFPASVDFTTDLHSMGQYVQEGRRNLIETVLHVKKPQIELTIQEDPENIDGLNFLAGKTLDEVNKKAFQGTLLAHVDGGVPNLIVELDEMNEYTFGEMVYFFEKACGISGHLLGVNPFDQPGVEAYKKNMFALLGKPGFEDEKAALMKRLSK</sequence>
<evidence type="ECO:0000255" key="1">
    <source>
        <dbReference type="HAMAP-Rule" id="MF_00473"/>
    </source>
</evidence>
<evidence type="ECO:0000305" key="2"/>
<evidence type="ECO:0007829" key="3">
    <source>
        <dbReference type="PDB" id="1B0Z"/>
    </source>
</evidence>
<evidence type="ECO:0007829" key="4">
    <source>
        <dbReference type="PDB" id="1C7Q"/>
    </source>
</evidence>
<dbReference type="EC" id="5.3.1.9" evidence="1"/>
<dbReference type="EMBL" id="X16640">
    <property type="protein sequence ID" value="CAA34635.1"/>
    <property type="molecule type" value="Genomic_DNA"/>
</dbReference>
<dbReference type="PIR" id="S06198">
    <property type="entry name" value="NUBSS"/>
</dbReference>
<dbReference type="PDB" id="1B0Z">
    <property type="method" value="X-ray"/>
    <property type="resolution" value="2.30 A"/>
    <property type="chains" value="A=1-445"/>
</dbReference>
<dbReference type="PDB" id="1C7Q">
    <property type="method" value="X-ray"/>
    <property type="resolution" value="2.30 A"/>
    <property type="chains" value="A=1-445"/>
</dbReference>
<dbReference type="PDB" id="1C7R">
    <property type="method" value="X-ray"/>
    <property type="resolution" value="2.50 A"/>
    <property type="chains" value="A=1-445"/>
</dbReference>
<dbReference type="PDB" id="2PGI">
    <property type="method" value="X-ray"/>
    <property type="resolution" value="2.30 A"/>
    <property type="chains" value="A=1-445"/>
</dbReference>
<dbReference type="PDBsum" id="1B0Z"/>
<dbReference type="PDBsum" id="1C7Q"/>
<dbReference type="PDBsum" id="1C7R"/>
<dbReference type="PDBsum" id="2PGI"/>
<dbReference type="SMR" id="P13376"/>
<dbReference type="DrugBank" id="DB03042">
    <property type="generic name" value="5-Phosphoarabinonic Acid"/>
</dbReference>
<dbReference type="DrugBank" id="DB02257">
    <property type="generic name" value="N-Bromoacetyl-Aminoethyl Phosphate"/>
</dbReference>
<dbReference type="BRENDA" id="5.3.1.9">
    <property type="organism ID" value="623"/>
</dbReference>
<dbReference type="SABIO-RK" id="P13376"/>
<dbReference type="UniPathway" id="UPA00109">
    <property type="reaction ID" value="UER00181"/>
</dbReference>
<dbReference type="UniPathway" id="UPA00138"/>
<dbReference type="EvolutionaryTrace" id="P13376"/>
<dbReference type="GO" id="GO:0005829">
    <property type="term" value="C:cytosol"/>
    <property type="evidence" value="ECO:0007669"/>
    <property type="project" value="TreeGrafter"/>
</dbReference>
<dbReference type="GO" id="GO:0097367">
    <property type="term" value="F:carbohydrate derivative binding"/>
    <property type="evidence" value="ECO:0007669"/>
    <property type="project" value="InterPro"/>
</dbReference>
<dbReference type="GO" id="GO:0004347">
    <property type="term" value="F:glucose-6-phosphate isomerase activity"/>
    <property type="evidence" value="ECO:0007669"/>
    <property type="project" value="UniProtKB-UniRule"/>
</dbReference>
<dbReference type="GO" id="GO:0048029">
    <property type="term" value="F:monosaccharide binding"/>
    <property type="evidence" value="ECO:0007669"/>
    <property type="project" value="TreeGrafter"/>
</dbReference>
<dbReference type="GO" id="GO:0006094">
    <property type="term" value="P:gluconeogenesis"/>
    <property type="evidence" value="ECO:0007669"/>
    <property type="project" value="UniProtKB-UniRule"/>
</dbReference>
<dbReference type="GO" id="GO:0051156">
    <property type="term" value="P:glucose 6-phosphate metabolic process"/>
    <property type="evidence" value="ECO:0007669"/>
    <property type="project" value="TreeGrafter"/>
</dbReference>
<dbReference type="GO" id="GO:0006096">
    <property type="term" value="P:glycolytic process"/>
    <property type="evidence" value="ECO:0007669"/>
    <property type="project" value="UniProtKB-UniRule"/>
</dbReference>
<dbReference type="CDD" id="cd05015">
    <property type="entry name" value="SIS_PGI_1"/>
    <property type="match status" value="1"/>
</dbReference>
<dbReference type="CDD" id="cd05016">
    <property type="entry name" value="SIS_PGI_2"/>
    <property type="match status" value="1"/>
</dbReference>
<dbReference type="FunFam" id="3.40.50.10490:FF:000015">
    <property type="entry name" value="Glucose-6-phosphate isomerase"/>
    <property type="match status" value="1"/>
</dbReference>
<dbReference type="FunFam" id="3.40.50.10490:FF:000016">
    <property type="entry name" value="Glucose-6-phosphate isomerase"/>
    <property type="match status" value="1"/>
</dbReference>
<dbReference type="Gene3D" id="3.40.50.10490">
    <property type="entry name" value="Glucose-6-phosphate isomerase like protein, domain 1"/>
    <property type="match status" value="3"/>
</dbReference>
<dbReference type="HAMAP" id="MF_00473">
    <property type="entry name" value="G6P_isomerase"/>
    <property type="match status" value="1"/>
</dbReference>
<dbReference type="InterPro" id="IPR001672">
    <property type="entry name" value="G6P_Isomerase"/>
</dbReference>
<dbReference type="InterPro" id="IPR018189">
    <property type="entry name" value="Phosphoglucose_isomerase_CS"/>
</dbReference>
<dbReference type="InterPro" id="IPR046348">
    <property type="entry name" value="SIS_dom_sf"/>
</dbReference>
<dbReference type="InterPro" id="IPR035476">
    <property type="entry name" value="SIS_PGI_1"/>
</dbReference>
<dbReference type="InterPro" id="IPR035482">
    <property type="entry name" value="SIS_PGI_2"/>
</dbReference>
<dbReference type="NCBIfam" id="NF010697">
    <property type="entry name" value="PRK14097.1"/>
    <property type="match status" value="1"/>
</dbReference>
<dbReference type="PANTHER" id="PTHR11469">
    <property type="entry name" value="GLUCOSE-6-PHOSPHATE ISOMERASE"/>
    <property type="match status" value="1"/>
</dbReference>
<dbReference type="PANTHER" id="PTHR11469:SF1">
    <property type="entry name" value="GLUCOSE-6-PHOSPHATE ISOMERASE"/>
    <property type="match status" value="1"/>
</dbReference>
<dbReference type="Pfam" id="PF00342">
    <property type="entry name" value="PGI"/>
    <property type="match status" value="1"/>
</dbReference>
<dbReference type="PRINTS" id="PR00662">
    <property type="entry name" value="G6PISOMERASE"/>
</dbReference>
<dbReference type="SUPFAM" id="SSF53697">
    <property type="entry name" value="SIS domain"/>
    <property type="match status" value="1"/>
</dbReference>
<dbReference type="PROSITE" id="PS00765">
    <property type="entry name" value="P_GLUCOSE_ISOMERASE_1"/>
    <property type="match status" value="1"/>
</dbReference>
<dbReference type="PROSITE" id="PS00174">
    <property type="entry name" value="P_GLUCOSE_ISOMERASE_2"/>
    <property type="match status" value="1"/>
</dbReference>
<dbReference type="PROSITE" id="PS51463">
    <property type="entry name" value="P_GLUCOSE_ISOMERASE_3"/>
    <property type="match status" value="1"/>
</dbReference>